<proteinExistence type="inferred from homology"/>
<reference key="1">
    <citation type="submission" date="2007-09" db="EMBL/GenBank/DDBJ databases">
        <title>Complete genome sequence of Rickettsia rickettsii.</title>
        <authorList>
            <person name="Madan A."/>
            <person name="Fahey J."/>
            <person name="Helton E."/>
            <person name="Ketteman M."/>
            <person name="Madan A."/>
            <person name="Rodrigues S."/>
            <person name="Sanchez A."/>
            <person name="Dasch G."/>
            <person name="Eremeeva M."/>
        </authorList>
    </citation>
    <scope>NUCLEOTIDE SEQUENCE [LARGE SCALE GENOMIC DNA]</scope>
    <source>
        <strain>Sheila Smith</strain>
    </source>
</reference>
<feature type="chain" id="PRO_1000012796" description="ATP-dependent protease ATPase subunit HslU">
    <location>
        <begin position="1"/>
        <end position="450"/>
    </location>
</feature>
<feature type="binding site" evidence="1">
    <location>
        <position position="29"/>
    </location>
    <ligand>
        <name>ATP</name>
        <dbReference type="ChEBI" id="CHEBI:30616"/>
    </ligand>
</feature>
<feature type="binding site" evidence="1">
    <location>
        <begin position="71"/>
        <end position="76"/>
    </location>
    <ligand>
        <name>ATP</name>
        <dbReference type="ChEBI" id="CHEBI:30616"/>
    </ligand>
</feature>
<feature type="binding site" evidence="1">
    <location>
        <position position="261"/>
    </location>
    <ligand>
        <name>ATP</name>
        <dbReference type="ChEBI" id="CHEBI:30616"/>
    </ligand>
</feature>
<feature type="binding site" evidence="1">
    <location>
        <position position="328"/>
    </location>
    <ligand>
        <name>ATP</name>
        <dbReference type="ChEBI" id="CHEBI:30616"/>
    </ligand>
</feature>
<feature type="binding site" evidence="1">
    <location>
        <position position="400"/>
    </location>
    <ligand>
        <name>ATP</name>
        <dbReference type="ChEBI" id="CHEBI:30616"/>
    </ligand>
</feature>
<evidence type="ECO:0000255" key="1">
    <source>
        <dbReference type="HAMAP-Rule" id="MF_00249"/>
    </source>
</evidence>
<organism>
    <name type="scientific">Rickettsia rickettsii (strain Sheila Smith)</name>
    <dbReference type="NCBI Taxonomy" id="392021"/>
    <lineage>
        <taxon>Bacteria</taxon>
        <taxon>Pseudomonadati</taxon>
        <taxon>Pseudomonadota</taxon>
        <taxon>Alphaproteobacteria</taxon>
        <taxon>Rickettsiales</taxon>
        <taxon>Rickettsiaceae</taxon>
        <taxon>Rickettsieae</taxon>
        <taxon>Rickettsia</taxon>
        <taxon>spotted fever group</taxon>
    </lineage>
</organism>
<protein>
    <recommendedName>
        <fullName evidence="1">ATP-dependent protease ATPase subunit HslU</fullName>
    </recommendedName>
    <alternativeName>
        <fullName evidence="1">Unfoldase HslU</fullName>
    </alternativeName>
</protein>
<dbReference type="EMBL" id="CP000848">
    <property type="protein sequence ID" value="ABV76043.1"/>
    <property type="molecule type" value="Genomic_DNA"/>
</dbReference>
<dbReference type="RefSeq" id="WP_012150639.1">
    <property type="nucleotide sequence ID" value="NZ_CP121767.1"/>
</dbReference>
<dbReference type="SMR" id="A8GRL8"/>
<dbReference type="GeneID" id="79937201"/>
<dbReference type="KEGG" id="rri:A1G_02460"/>
<dbReference type="HOGENOM" id="CLU_033123_0_0_5"/>
<dbReference type="Proteomes" id="UP000006832">
    <property type="component" value="Chromosome"/>
</dbReference>
<dbReference type="GO" id="GO:0009376">
    <property type="term" value="C:HslUV protease complex"/>
    <property type="evidence" value="ECO:0007669"/>
    <property type="project" value="UniProtKB-UniRule"/>
</dbReference>
<dbReference type="GO" id="GO:0005524">
    <property type="term" value="F:ATP binding"/>
    <property type="evidence" value="ECO:0007669"/>
    <property type="project" value="UniProtKB-UniRule"/>
</dbReference>
<dbReference type="GO" id="GO:0016887">
    <property type="term" value="F:ATP hydrolysis activity"/>
    <property type="evidence" value="ECO:0007669"/>
    <property type="project" value="InterPro"/>
</dbReference>
<dbReference type="GO" id="GO:0008233">
    <property type="term" value="F:peptidase activity"/>
    <property type="evidence" value="ECO:0007669"/>
    <property type="project" value="InterPro"/>
</dbReference>
<dbReference type="GO" id="GO:0036402">
    <property type="term" value="F:proteasome-activating activity"/>
    <property type="evidence" value="ECO:0007669"/>
    <property type="project" value="UniProtKB-UniRule"/>
</dbReference>
<dbReference type="GO" id="GO:0043335">
    <property type="term" value="P:protein unfolding"/>
    <property type="evidence" value="ECO:0007669"/>
    <property type="project" value="UniProtKB-UniRule"/>
</dbReference>
<dbReference type="GO" id="GO:0051603">
    <property type="term" value="P:proteolysis involved in protein catabolic process"/>
    <property type="evidence" value="ECO:0007669"/>
    <property type="project" value="TreeGrafter"/>
</dbReference>
<dbReference type="CDD" id="cd19498">
    <property type="entry name" value="RecA-like_HslU"/>
    <property type="match status" value="1"/>
</dbReference>
<dbReference type="FunFam" id="3.40.50.300:FF:000213">
    <property type="entry name" value="ATP-dependent protease ATPase subunit HslU"/>
    <property type="match status" value="1"/>
</dbReference>
<dbReference type="Gene3D" id="1.10.8.60">
    <property type="match status" value="1"/>
</dbReference>
<dbReference type="Gene3D" id="1.10.8.10">
    <property type="entry name" value="DNA helicase RuvA subunit, C-terminal domain"/>
    <property type="match status" value="1"/>
</dbReference>
<dbReference type="Gene3D" id="3.40.50.300">
    <property type="entry name" value="P-loop containing nucleotide triphosphate hydrolases"/>
    <property type="match status" value="2"/>
</dbReference>
<dbReference type="HAMAP" id="MF_00249">
    <property type="entry name" value="HslU"/>
    <property type="match status" value="1"/>
</dbReference>
<dbReference type="InterPro" id="IPR003593">
    <property type="entry name" value="AAA+_ATPase"/>
</dbReference>
<dbReference type="InterPro" id="IPR050052">
    <property type="entry name" value="ATP-dep_Clp_protease_ClpX"/>
</dbReference>
<dbReference type="InterPro" id="IPR003959">
    <property type="entry name" value="ATPase_AAA_core"/>
</dbReference>
<dbReference type="InterPro" id="IPR019489">
    <property type="entry name" value="Clp_ATPase_C"/>
</dbReference>
<dbReference type="InterPro" id="IPR004491">
    <property type="entry name" value="HslU"/>
</dbReference>
<dbReference type="InterPro" id="IPR027417">
    <property type="entry name" value="P-loop_NTPase"/>
</dbReference>
<dbReference type="NCBIfam" id="TIGR00390">
    <property type="entry name" value="hslU"/>
    <property type="match status" value="1"/>
</dbReference>
<dbReference type="NCBIfam" id="NF003544">
    <property type="entry name" value="PRK05201.1"/>
    <property type="match status" value="1"/>
</dbReference>
<dbReference type="PANTHER" id="PTHR48102">
    <property type="entry name" value="ATP-DEPENDENT CLP PROTEASE ATP-BINDING SUBUNIT CLPX-LIKE, MITOCHONDRIAL-RELATED"/>
    <property type="match status" value="1"/>
</dbReference>
<dbReference type="PANTHER" id="PTHR48102:SF3">
    <property type="entry name" value="ATP-DEPENDENT PROTEASE ATPASE SUBUNIT HSLU"/>
    <property type="match status" value="1"/>
</dbReference>
<dbReference type="Pfam" id="PF00004">
    <property type="entry name" value="AAA"/>
    <property type="match status" value="1"/>
</dbReference>
<dbReference type="Pfam" id="PF07724">
    <property type="entry name" value="AAA_2"/>
    <property type="match status" value="1"/>
</dbReference>
<dbReference type="SMART" id="SM00382">
    <property type="entry name" value="AAA"/>
    <property type="match status" value="1"/>
</dbReference>
<dbReference type="SMART" id="SM01086">
    <property type="entry name" value="ClpB_D2-small"/>
    <property type="match status" value="1"/>
</dbReference>
<dbReference type="SUPFAM" id="SSF52540">
    <property type="entry name" value="P-loop containing nucleoside triphosphate hydrolases"/>
    <property type="match status" value="1"/>
</dbReference>
<sequence length="450" mass="49656">MKATKTTYKKDPMGLTPSQIVNELNRFIVGQEKAKKAVAIALRNRCRRKRVEGNLRNEIVPKNILMIGSTGVGKTEIARRLATLTNSPFYKIEATKFTEVGYVGRDVESIIRDLVEIAVNTEKTLAKTKVDIHAREKAIERILDSLVGKTSSSETREKFKEKILNGELDDTEIEISVADTTPVGGGSFEIPGMPGASMGVLNLGDMIGRALGSSKTKTKKMLVKDAMAIIIPEESEKLIDQEKIIQQAINLAENDGIVFIDEIDKIASTGSSRAKNAEISREGVQRDLLPLIEGTTVNTKYGPVKTDHILFIASGAFHIAKPSDLLPELQGRLPIRVELNSLTKDDMIKILLEPETSLIKQYSALIGTEDVRLEFAASAIEKIADYAITVNLEVEDIGARRLHTILENLLEDISFEASEMKGKKITIDDKFVENQLSKIITNLDLAKFVL</sequence>
<gene>
    <name evidence="1" type="primary">hslU</name>
    <name type="ordered locus">A1G_02460</name>
</gene>
<name>HSLU_RICRS</name>
<comment type="function">
    <text evidence="1">ATPase subunit of a proteasome-like degradation complex; this subunit has chaperone activity. The binding of ATP and its subsequent hydrolysis by HslU are essential for unfolding of protein substrates subsequently hydrolyzed by HslV. HslU recognizes the N-terminal part of its protein substrates and unfolds these before they are guided to HslV for hydrolysis.</text>
</comment>
<comment type="subunit">
    <text evidence="1">A double ring-shaped homohexamer of HslV is capped on each side by a ring-shaped HslU homohexamer. The assembly of the HslU/HslV complex is dependent on binding of ATP.</text>
</comment>
<comment type="subcellular location">
    <subcellularLocation>
        <location evidence="1">Cytoplasm</location>
    </subcellularLocation>
</comment>
<comment type="similarity">
    <text evidence="1">Belongs to the ClpX chaperone family. HslU subfamily.</text>
</comment>
<keyword id="KW-0067">ATP-binding</keyword>
<keyword id="KW-0143">Chaperone</keyword>
<keyword id="KW-0963">Cytoplasm</keyword>
<keyword id="KW-0547">Nucleotide-binding</keyword>
<accession>A8GRL8</accession>